<sequence>MPRTRTPLAAIVLAAGKGTRMKSNKAKVLHEVAGRPLAYYPVKRALELGASPVVVVVGHQAEAVEAALSAALPEAPLRFAVQEQQLGTAHAVLAAKRALRGYRGPVLILSGDTPLLRAETLEAVVSARRRARAAVSLATMTLEAPRGYGRVVRDARGRPARIVEEKDATEAERAVREVNAGLYCVDAELLWKKLAKVGTANAQREFYLTDLVPMAAQAGGVAGVEVPVEEASGVNDRVELSRANRVMVGRLAEAFMRAGVTIEDPARFDCDEGVEIGADAVIEPNVRLRGRTRVGARTRVGAGAVITDGVLADGVTVNPYTVISEAQVAEGAILGPFSRLRPGADIGPEAHVGNFVEVKKSRLGKGAKANHLAYLGDAEIGAGANIGAGTITCNYDGERKNPTRIGEGAFIGSDSILVAPIEIGAGAYVAAGSTLTDPVPAGALALGRARQVTKEGWVAQRQAEKQMKGTATGPASARKGRPAARRAS</sequence>
<keyword id="KW-0012">Acyltransferase</keyword>
<keyword id="KW-0133">Cell shape</keyword>
<keyword id="KW-0961">Cell wall biogenesis/degradation</keyword>
<keyword id="KW-0963">Cytoplasm</keyword>
<keyword id="KW-0460">Magnesium</keyword>
<keyword id="KW-0479">Metal-binding</keyword>
<keyword id="KW-0511">Multifunctional enzyme</keyword>
<keyword id="KW-0548">Nucleotidyltransferase</keyword>
<keyword id="KW-0573">Peptidoglycan synthesis</keyword>
<keyword id="KW-0677">Repeat</keyword>
<keyword id="KW-0808">Transferase</keyword>
<comment type="function">
    <text evidence="1">Catalyzes the last two sequential reactions in the de novo biosynthetic pathway for UDP-N-acetylglucosamine (UDP-GlcNAc). The C-terminal domain catalyzes the transfer of acetyl group from acetyl coenzyme A to glucosamine-1-phosphate (GlcN-1-P) to produce N-acetylglucosamine-1-phosphate (GlcNAc-1-P), which is converted into UDP-GlcNAc by the transfer of uridine 5-monophosphate (from uridine 5-triphosphate), a reaction catalyzed by the N-terminal domain.</text>
</comment>
<comment type="catalytic activity">
    <reaction evidence="1">
        <text>alpha-D-glucosamine 1-phosphate + acetyl-CoA = N-acetyl-alpha-D-glucosamine 1-phosphate + CoA + H(+)</text>
        <dbReference type="Rhea" id="RHEA:13725"/>
        <dbReference type="ChEBI" id="CHEBI:15378"/>
        <dbReference type="ChEBI" id="CHEBI:57287"/>
        <dbReference type="ChEBI" id="CHEBI:57288"/>
        <dbReference type="ChEBI" id="CHEBI:57776"/>
        <dbReference type="ChEBI" id="CHEBI:58516"/>
        <dbReference type="EC" id="2.3.1.157"/>
    </reaction>
</comment>
<comment type="catalytic activity">
    <reaction evidence="1">
        <text>N-acetyl-alpha-D-glucosamine 1-phosphate + UTP + H(+) = UDP-N-acetyl-alpha-D-glucosamine + diphosphate</text>
        <dbReference type="Rhea" id="RHEA:13509"/>
        <dbReference type="ChEBI" id="CHEBI:15378"/>
        <dbReference type="ChEBI" id="CHEBI:33019"/>
        <dbReference type="ChEBI" id="CHEBI:46398"/>
        <dbReference type="ChEBI" id="CHEBI:57705"/>
        <dbReference type="ChEBI" id="CHEBI:57776"/>
        <dbReference type="EC" id="2.7.7.23"/>
    </reaction>
</comment>
<comment type="cofactor">
    <cofactor evidence="1">
        <name>Mg(2+)</name>
        <dbReference type="ChEBI" id="CHEBI:18420"/>
    </cofactor>
    <text evidence="1">Binds 1 Mg(2+) ion per subunit.</text>
</comment>
<comment type="pathway">
    <text evidence="1">Nucleotide-sugar biosynthesis; UDP-N-acetyl-alpha-D-glucosamine biosynthesis; N-acetyl-alpha-D-glucosamine 1-phosphate from alpha-D-glucosamine 6-phosphate (route II): step 2/2.</text>
</comment>
<comment type="pathway">
    <text evidence="1">Nucleotide-sugar biosynthesis; UDP-N-acetyl-alpha-D-glucosamine biosynthesis; UDP-N-acetyl-alpha-D-glucosamine from N-acetyl-alpha-D-glucosamine 1-phosphate: step 1/1.</text>
</comment>
<comment type="pathway">
    <text evidence="1">Bacterial outer membrane biogenesis; LPS lipid A biosynthesis.</text>
</comment>
<comment type="subunit">
    <text evidence="1">Homotrimer.</text>
</comment>
<comment type="subcellular location">
    <subcellularLocation>
        <location evidence="1">Cytoplasm</location>
    </subcellularLocation>
</comment>
<comment type="similarity">
    <text evidence="1">In the N-terminal section; belongs to the N-acetylglucosamine-1-phosphate uridyltransferase family.</text>
</comment>
<comment type="similarity">
    <text evidence="1">In the C-terminal section; belongs to the transferase hexapeptide repeat family.</text>
</comment>
<name>GLMU_ANASK</name>
<gene>
    <name evidence="1" type="primary">glmU</name>
    <name type="ordered locus">AnaeK_4068</name>
</gene>
<accession>B4UGJ1</accession>
<protein>
    <recommendedName>
        <fullName evidence="1">Bifunctional protein GlmU</fullName>
    </recommendedName>
    <domain>
        <recommendedName>
            <fullName evidence="1">UDP-N-acetylglucosamine pyrophosphorylase</fullName>
            <ecNumber evidence="1">2.7.7.23</ecNumber>
        </recommendedName>
        <alternativeName>
            <fullName evidence="1">N-acetylglucosamine-1-phosphate uridyltransferase</fullName>
        </alternativeName>
    </domain>
    <domain>
        <recommendedName>
            <fullName evidence="1">Glucosamine-1-phosphate N-acetyltransferase</fullName>
            <ecNumber evidence="1">2.3.1.157</ecNumber>
        </recommendedName>
    </domain>
</protein>
<feature type="chain" id="PRO_1000186394" description="Bifunctional protein GlmU">
    <location>
        <begin position="1"/>
        <end position="488"/>
    </location>
</feature>
<feature type="region of interest" description="Pyrophosphorylase" evidence="1">
    <location>
        <begin position="1"/>
        <end position="237"/>
    </location>
</feature>
<feature type="region of interest" description="Linker" evidence="1">
    <location>
        <begin position="238"/>
        <end position="258"/>
    </location>
</feature>
<feature type="region of interest" description="N-acetyltransferase" evidence="1">
    <location>
        <begin position="259"/>
        <end position="488"/>
    </location>
</feature>
<feature type="region of interest" description="Disordered" evidence="2">
    <location>
        <begin position="459"/>
        <end position="488"/>
    </location>
</feature>
<feature type="compositionally biased region" description="Basic residues" evidence="2">
    <location>
        <begin position="478"/>
        <end position="488"/>
    </location>
</feature>
<feature type="active site" description="Proton acceptor" evidence="1">
    <location>
        <position position="371"/>
    </location>
</feature>
<feature type="binding site" evidence="1">
    <location>
        <begin position="13"/>
        <end position="16"/>
    </location>
    <ligand>
        <name>UDP-N-acetyl-alpha-D-glucosamine</name>
        <dbReference type="ChEBI" id="CHEBI:57705"/>
    </ligand>
</feature>
<feature type="binding site" evidence="1">
    <location>
        <position position="27"/>
    </location>
    <ligand>
        <name>UDP-N-acetyl-alpha-D-glucosamine</name>
        <dbReference type="ChEBI" id="CHEBI:57705"/>
    </ligand>
</feature>
<feature type="binding site" evidence="1">
    <location>
        <position position="82"/>
    </location>
    <ligand>
        <name>UDP-N-acetyl-alpha-D-glucosamine</name>
        <dbReference type="ChEBI" id="CHEBI:57705"/>
    </ligand>
</feature>
<feature type="binding site" evidence="1">
    <location>
        <begin position="87"/>
        <end position="88"/>
    </location>
    <ligand>
        <name>UDP-N-acetyl-alpha-D-glucosamine</name>
        <dbReference type="ChEBI" id="CHEBI:57705"/>
    </ligand>
</feature>
<feature type="binding site" evidence="1">
    <location>
        <begin position="110"/>
        <end position="112"/>
    </location>
    <ligand>
        <name>UDP-N-acetyl-alpha-D-glucosamine</name>
        <dbReference type="ChEBI" id="CHEBI:57705"/>
    </ligand>
</feature>
<feature type="binding site" evidence="1">
    <location>
        <position position="112"/>
    </location>
    <ligand>
        <name>Mg(2+)</name>
        <dbReference type="ChEBI" id="CHEBI:18420"/>
    </ligand>
</feature>
<feature type="binding site" evidence="1">
    <location>
        <position position="149"/>
    </location>
    <ligand>
        <name>UDP-N-acetyl-alpha-D-glucosamine</name>
        <dbReference type="ChEBI" id="CHEBI:57705"/>
    </ligand>
</feature>
<feature type="binding site" evidence="1">
    <location>
        <position position="164"/>
    </location>
    <ligand>
        <name>UDP-N-acetyl-alpha-D-glucosamine</name>
        <dbReference type="ChEBI" id="CHEBI:57705"/>
    </ligand>
</feature>
<feature type="binding site" evidence="1">
    <location>
        <position position="179"/>
    </location>
    <ligand>
        <name>UDP-N-acetyl-alpha-D-glucosamine</name>
        <dbReference type="ChEBI" id="CHEBI:57705"/>
    </ligand>
</feature>
<feature type="binding site" evidence="1">
    <location>
        <position position="235"/>
    </location>
    <ligand>
        <name>Mg(2+)</name>
        <dbReference type="ChEBI" id="CHEBI:18420"/>
    </ligand>
</feature>
<feature type="binding site" evidence="1">
    <location>
        <position position="235"/>
    </location>
    <ligand>
        <name>UDP-N-acetyl-alpha-D-glucosamine</name>
        <dbReference type="ChEBI" id="CHEBI:57705"/>
    </ligand>
</feature>
<feature type="binding site" evidence="1">
    <location>
        <position position="341"/>
    </location>
    <ligand>
        <name>UDP-N-acetyl-alpha-D-glucosamine</name>
        <dbReference type="ChEBI" id="CHEBI:57705"/>
    </ligand>
</feature>
<feature type="binding site" evidence="1">
    <location>
        <position position="359"/>
    </location>
    <ligand>
        <name>UDP-N-acetyl-alpha-D-glucosamine</name>
        <dbReference type="ChEBI" id="CHEBI:57705"/>
    </ligand>
</feature>
<feature type="binding site" evidence="1">
    <location>
        <position position="374"/>
    </location>
    <ligand>
        <name>UDP-N-acetyl-alpha-D-glucosamine</name>
        <dbReference type="ChEBI" id="CHEBI:57705"/>
    </ligand>
</feature>
<feature type="binding site" evidence="1">
    <location>
        <position position="385"/>
    </location>
    <ligand>
        <name>UDP-N-acetyl-alpha-D-glucosamine</name>
        <dbReference type="ChEBI" id="CHEBI:57705"/>
    </ligand>
</feature>
<feature type="binding site" evidence="1">
    <location>
        <position position="388"/>
    </location>
    <ligand>
        <name>acetyl-CoA</name>
        <dbReference type="ChEBI" id="CHEBI:57288"/>
    </ligand>
</feature>
<feature type="binding site" evidence="1">
    <location>
        <begin position="394"/>
        <end position="395"/>
    </location>
    <ligand>
        <name>acetyl-CoA</name>
        <dbReference type="ChEBI" id="CHEBI:57288"/>
    </ligand>
</feature>
<feature type="binding site" evidence="1">
    <location>
        <position position="413"/>
    </location>
    <ligand>
        <name>acetyl-CoA</name>
        <dbReference type="ChEBI" id="CHEBI:57288"/>
    </ligand>
</feature>
<feature type="binding site" evidence="1">
    <location>
        <position position="431"/>
    </location>
    <ligand>
        <name>acetyl-CoA</name>
        <dbReference type="ChEBI" id="CHEBI:57288"/>
    </ligand>
</feature>
<feature type="binding site" evidence="1">
    <location>
        <position position="448"/>
    </location>
    <ligand>
        <name>acetyl-CoA</name>
        <dbReference type="ChEBI" id="CHEBI:57288"/>
    </ligand>
</feature>
<evidence type="ECO:0000255" key="1">
    <source>
        <dbReference type="HAMAP-Rule" id="MF_01631"/>
    </source>
</evidence>
<evidence type="ECO:0000256" key="2">
    <source>
        <dbReference type="SAM" id="MobiDB-lite"/>
    </source>
</evidence>
<organism>
    <name type="scientific">Anaeromyxobacter sp. (strain K)</name>
    <dbReference type="NCBI Taxonomy" id="447217"/>
    <lineage>
        <taxon>Bacteria</taxon>
        <taxon>Pseudomonadati</taxon>
        <taxon>Myxococcota</taxon>
        <taxon>Myxococcia</taxon>
        <taxon>Myxococcales</taxon>
        <taxon>Cystobacterineae</taxon>
        <taxon>Anaeromyxobacteraceae</taxon>
        <taxon>Anaeromyxobacter</taxon>
    </lineage>
</organism>
<reference key="1">
    <citation type="submission" date="2008-08" db="EMBL/GenBank/DDBJ databases">
        <title>Complete sequence of Anaeromyxobacter sp. K.</title>
        <authorList>
            <consortium name="US DOE Joint Genome Institute"/>
            <person name="Lucas S."/>
            <person name="Copeland A."/>
            <person name="Lapidus A."/>
            <person name="Glavina del Rio T."/>
            <person name="Dalin E."/>
            <person name="Tice H."/>
            <person name="Bruce D."/>
            <person name="Goodwin L."/>
            <person name="Pitluck S."/>
            <person name="Saunders E."/>
            <person name="Brettin T."/>
            <person name="Detter J.C."/>
            <person name="Han C."/>
            <person name="Larimer F."/>
            <person name="Land M."/>
            <person name="Hauser L."/>
            <person name="Kyrpides N."/>
            <person name="Ovchinnikiva G."/>
            <person name="Beliaev A."/>
        </authorList>
    </citation>
    <scope>NUCLEOTIDE SEQUENCE [LARGE SCALE GENOMIC DNA]</scope>
    <source>
        <strain>K</strain>
    </source>
</reference>
<proteinExistence type="inferred from homology"/>
<dbReference type="EC" id="2.7.7.23" evidence="1"/>
<dbReference type="EC" id="2.3.1.157" evidence="1"/>
<dbReference type="EMBL" id="CP001131">
    <property type="protein sequence ID" value="ACG75273.1"/>
    <property type="molecule type" value="Genomic_DNA"/>
</dbReference>
<dbReference type="RefSeq" id="WP_012528026.1">
    <property type="nucleotide sequence ID" value="NC_011145.1"/>
</dbReference>
<dbReference type="SMR" id="B4UGJ1"/>
<dbReference type="KEGG" id="ank:AnaeK_4068"/>
<dbReference type="HOGENOM" id="CLU_029499_15_2_7"/>
<dbReference type="OrthoDB" id="9775031at2"/>
<dbReference type="UniPathway" id="UPA00113">
    <property type="reaction ID" value="UER00532"/>
</dbReference>
<dbReference type="UniPathway" id="UPA00113">
    <property type="reaction ID" value="UER00533"/>
</dbReference>
<dbReference type="UniPathway" id="UPA00973"/>
<dbReference type="Proteomes" id="UP000001871">
    <property type="component" value="Chromosome"/>
</dbReference>
<dbReference type="GO" id="GO:0005737">
    <property type="term" value="C:cytoplasm"/>
    <property type="evidence" value="ECO:0007669"/>
    <property type="project" value="UniProtKB-SubCell"/>
</dbReference>
<dbReference type="GO" id="GO:0016020">
    <property type="term" value="C:membrane"/>
    <property type="evidence" value="ECO:0007669"/>
    <property type="project" value="GOC"/>
</dbReference>
<dbReference type="GO" id="GO:0019134">
    <property type="term" value="F:glucosamine-1-phosphate N-acetyltransferase activity"/>
    <property type="evidence" value="ECO:0007669"/>
    <property type="project" value="UniProtKB-UniRule"/>
</dbReference>
<dbReference type="GO" id="GO:0000287">
    <property type="term" value="F:magnesium ion binding"/>
    <property type="evidence" value="ECO:0007669"/>
    <property type="project" value="UniProtKB-UniRule"/>
</dbReference>
<dbReference type="GO" id="GO:0003977">
    <property type="term" value="F:UDP-N-acetylglucosamine diphosphorylase activity"/>
    <property type="evidence" value="ECO:0007669"/>
    <property type="project" value="UniProtKB-UniRule"/>
</dbReference>
<dbReference type="GO" id="GO:0000902">
    <property type="term" value="P:cell morphogenesis"/>
    <property type="evidence" value="ECO:0007669"/>
    <property type="project" value="UniProtKB-UniRule"/>
</dbReference>
<dbReference type="GO" id="GO:0071555">
    <property type="term" value="P:cell wall organization"/>
    <property type="evidence" value="ECO:0007669"/>
    <property type="project" value="UniProtKB-KW"/>
</dbReference>
<dbReference type="GO" id="GO:0009245">
    <property type="term" value="P:lipid A biosynthetic process"/>
    <property type="evidence" value="ECO:0007669"/>
    <property type="project" value="UniProtKB-UniRule"/>
</dbReference>
<dbReference type="GO" id="GO:0009252">
    <property type="term" value="P:peptidoglycan biosynthetic process"/>
    <property type="evidence" value="ECO:0007669"/>
    <property type="project" value="UniProtKB-UniRule"/>
</dbReference>
<dbReference type="GO" id="GO:0008360">
    <property type="term" value="P:regulation of cell shape"/>
    <property type="evidence" value="ECO:0007669"/>
    <property type="project" value="UniProtKB-KW"/>
</dbReference>
<dbReference type="GO" id="GO:0006048">
    <property type="term" value="P:UDP-N-acetylglucosamine biosynthetic process"/>
    <property type="evidence" value="ECO:0007669"/>
    <property type="project" value="UniProtKB-UniPathway"/>
</dbReference>
<dbReference type="CDD" id="cd02540">
    <property type="entry name" value="GT2_GlmU_N_bac"/>
    <property type="match status" value="1"/>
</dbReference>
<dbReference type="CDD" id="cd03353">
    <property type="entry name" value="LbH_GlmU_C"/>
    <property type="match status" value="1"/>
</dbReference>
<dbReference type="Gene3D" id="2.160.10.10">
    <property type="entry name" value="Hexapeptide repeat proteins"/>
    <property type="match status" value="1"/>
</dbReference>
<dbReference type="Gene3D" id="3.90.550.10">
    <property type="entry name" value="Spore Coat Polysaccharide Biosynthesis Protein SpsA, Chain A"/>
    <property type="match status" value="1"/>
</dbReference>
<dbReference type="HAMAP" id="MF_01631">
    <property type="entry name" value="GlmU"/>
    <property type="match status" value="1"/>
</dbReference>
<dbReference type="InterPro" id="IPR005882">
    <property type="entry name" value="Bifunctional_GlmU"/>
</dbReference>
<dbReference type="InterPro" id="IPR050065">
    <property type="entry name" value="GlmU-like"/>
</dbReference>
<dbReference type="InterPro" id="IPR038009">
    <property type="entry name" value="GlmU_C_LbH"/>
</dbReference>
<dbReference type="InterPro" id="IPR001451">
    <property type="entry name" value="Hexapep"/>
</dbReference>
<dbReference type="InterPro" id="IPR018357">
    <property type="entry name" value="Hexapep_transf_CS"/>
</dbReference>
<dbReference type="InterPro" id="IPR025877">
    <property type="entry name" value="MobA-like_NTP_Trfase"/>
</dbReference>
<dbReference type="InterPro" id="IPR029044">
    <property type="entry name" value="Nucleotide-diphossugar_trans"/>
</dbReference>
<dbReference type="InterPro" id="IPR011004">
    <property type="entry name" value="Trimer_LpxA-like_sf"/>
</dbReference>
<dbReference type="NCBIfam" id="TIGR01173">
    <property type="entry name" value="glmU"/>
    <property type="match status" value="1"/>
</dbReference>
<dbReference type="PANTHER" id="PTHR43584:SF3">
    <property type="entry name" value="BIFUNCTIONAL PROTEIN GLMU"/>
    <property type="match status" value="1"/>
</dbReference>
<dbReference type="PANTHER" id="PTHR43584">
    <property type="entry name" value="NUCLEOTIDYL TRANSFERASE"/>
    <property type="match status" value="1"/>
</dbReference>
<dbReference type="Pfam" id="PF00132">
    <property type="entry name" value="Hexapep"/>
    <property type="match status" value="2"/>
</dbReference>
<dbReference type="Pfam" id="PF12804">
    <property type="entry name" value="NTP_transf_3"/>
    <property type="match status" value="1"/>
</dbReference>
<dbReference type="SUPFAM" id="SSF53448">
    <property type="entry name" value="Nucleotide-diphospho-sugar transferases"/>
    <property type="match status" value="1"/>
</dbReference>
<dbReference type="SUPFAM" id="SSF51161">
    <property type="entry name" value="Trimeric LpxA-like enzymes"/>
    <property type="match status" value="1"/>
</dbReference>
<dbReference type="PROSITE" id="PS00101">
    <property type="entry name" value="HEXAPEP_TRANSFERASES"/>
    <property type="match status" value="1"/>
</dbReference>